<evidence type="ECO:0000255" key="1">
    <source>
        <dbReference type="HAMAP-Rule" id="MF_01369"/>
    </source>
</evidence>
<evidence type="ECO:0000305" key="2"/>
<reference key="1">
    <citation type="journal article" date="2004" name="Nucleic Acids Res.">
        <title>Unique features revealed by the genome sequence of Acinetobacter sp. ADP1, a versatile and naturally transformation competent bacterium.</title>
        <authorList>
            <person name="Barbe V."/>
            <person name="Vallenet D."/>
            <person name="Fonknechten N."/>
            <person name="Kreimeyer A."/>
            <person name="Oztas S."/>
            <person name="Labarre L."/>
            <person name="Cruveiller S."/>
            <person name="Robert C."/>
            <person name="Duprat S."/>
            <person name="Wincker P."/>
            <person name="Ornston L.N."/>
            <person name="Weissenbach J."/>
            <person name="Marliere P."/>
            <person name="Cohen G.N."/>
            <person name="Medigue C."/>
        </authorList>
    </citation>
    <scope>NUCLEOTIDE SEQUENCE [LARGE SCALE GENOMIC DNA]</scope>
    <source>
        <strain>ATCC 33305 / BD413 / ADP1</strain>
    </source>
</reference>
<sequence>MNNERIYQVLKGPVFSEKAQVLGETAGVQVFKVDINATKLEIKKAVEKLFGVDVLKVNTTITKGKSKRFGKTLGRRSDVKKAYVTLKAGQDVEMADLGDTAESAAE</sequence>
<protein>
    <recommendedName>
        <fullName evidence="1">Large ribosomal subunit protein uL23</fullName>
    </recommendedName>
    <alternativeName>
        <fullName evidence="2">50S ribosomal protein L23</fullName>
    </alternativeName>
</protein>
<keyword id="KW-0687">Ribonucleoprotein</keyword>
<keyword id="KW-0689">Ribosomal protein</keyword>
<keyword id="KW-0694">RNA-binding</keyword>
<keyword id="KW-0699">rRNA-binding</keyword>
<organism>
    <name type="scientific">Acinetobacter baylyi (strain ATCC 33305 / BD413 / ADP1)</name>
    <dbReference type="NCBI Taxonomy" id="62977"/>
    <lineage>
        <taxon>Bacteria</taxon>
        <taxon>Pseudomonadati</taxon>
        <taxon>Pseudomonadota</taxon>
        <taxon>Gammaproteobacteria</taxon>
        <taxon>Moraxellales</taxon>
        <taxon>Moraxellaceae</taxon>
        <taxon>Acinetobacter</taxon>
    </lineage>
</organism>
<comment type="function">
    <text evidence="1">One of the early assembly proteins it binds 23S rRNA. One of the proteins that surrounds the polypeptide exit tunnel on the outside of the ribosome. Forms the main docking site for trigger factor binding to the ribosome.</text>
</comment>
<comment type="subunit">
    <text evidence="1">Part of the 50S ribosomal subunit. Contacts protein L29, and trigger factor when it is bound to the ribosome.</text>
</comment>
<comment type="similarity">
    <text evidence="1">Belongs to the universal ribosomal protein uL23 family.</text>
</comment>
<feature type="chain" id="PRO_0000272691" description="Large ribosomal subunit protein uL23">
    <location>
        <begin position="1"/>
        <end position="106"/>
    </location>
</feature>
<name>RL23_ACIAD</name>
<gene>
    <name evidence="1" type="primary">rplW</name>
    <name type="ordered locus">ACIAD3217</name>
</gene>
<dbReference type="EMBL" id="CR543861">
    <property type="protein sequence ID" value="CAG69901.1"/>
    <property type="molecule type" value="Genomic_DNA"/>
</dbReference>
<dbReference type="RefSeq" id="WP_004924102.1">
    <property type="nucleotide sequence ID" value="NC_005966.1"/>
</dbReference>
<dbReference type="SMR" id="Q6F7R4"/>
<dbReference type="STRING" id="202950.GCA_001485005_02938"/>
<dbReference type="GeneID" id="67513053"/>
<dbReference type="KEGG" id="aci:ACIAD3217"/>
<dbReference type="eggNOG" id="COG0089">
    <property type="taxonomic scope" value="Bacteria"/>
</dbReference>
<dbReference type="HOGENOM" id="CLU_037562_3_1_6"/>
<dbReference type="OrthoDB" id="9793353at2"/>
<dbReference type="BioCyc" id="ASP62977:ACIAD_RS14585-MONOMER"/>
<dbReference type="Proteomes" id="UP000000430">
    <property type="component" value="Chromosome"/>
</dbReference>
<dbReference type="GO" id="GO:1990904">
    <property type="term" value="C:ribonucleoprotein complex"/>
    <property type="evidence" value="ECO:0007669"/>
    <property type="project" value="UniProtKB-KW"/>
</dbReference>
<dbReference type="GO" id="GO:0005840">
    <property type="term" value="C:ribosome"/>
    <property type="evidence" value="ECO:0007669"/>
    <property type="project" value="UniProtKB-KW"/>
</dbReference>
<dbReference type="GO" id="GO:0019843">
    <property type="term" value="F:rRNA binding"/>
    <property type="evidence" value="ECO:0007669"/>
    <property type="project" value="UniProtKB-UniRule"/>
</dbReference>
<dbReference type="GO" id="GO:0003735">
    <property type="term" value="F:structural constituent of ribosome"/>
    <property type="evidence" value="ECO:0007669"/>
    <property type="project" value="InterPro"/>
</dbReference>
<dbReference type="GO" id="GO:0006412">
    <property type="term" value="P:translation"/>
    <property type="evidence" value="ECO:0007669"/>
    <property type="project" value="UniProtKB-UniRule"/>
</dbReference>
<dbReference type="FunFam" id="3.30.70.330:FF:000001">
    <property type="entry name" value="50S ribosomal protein L23"/>
    <property type="match status" value="1"/>
</dbReference>
<dbReference type="Gene3D" id="3.30.70.330">
    <property type="match status" value="1"/>
</dbReference>
<dbReference type="HAMAP" id="MF_01369_B">
    <property type="entry name" value="Ribosomal_uL23_B"/>
    <property type="match status" value="1"/>
</dbReference>
<dbReference type="InterPro" id="IPR012677">
    <property type="entry name" value="Nucleotide-bd_a/b_plait_sf"/>
</dbReference>
<dbReference type="InterPro" id="IPR013025">
    <property type="entry name" value="Ribosomal_uL23-like"/>
</dbReference>
<dbReference type="InterPro" id="IPR012678">
    <property type="entry name" value="Ribosomal_uL23/eL15/eS24_sf"/>
</dbReference>
<dbReference type="NCBIfam" id="NF004359">
    <property type="entry name" value="PRK05738.1-3"/>
    <property type="match status" value="1"/>
</dbReference>
<dbReference type="NCBIfam" id="NF004363">
    <property type="entry name" value="PRK05738.2-4"/>
    <property type="match status" value="1"/>
</dbReference>
<dbReference type="PANTHER" id="PTHR11620">
    <property type="entry name" value="60S RIBOSOMAL PROTEIN L23A"/>
    <property type="match status" value="1"/>
</dbReference>
<dbReference type="Pfam" id="PF00276">
    <property type="entry name" value="Ribosomal_L23"/>
    <property type="match status" value="1"/>
</dbReference>
<dbReference type="SUPFAM" id="SSF54189">
    <property type="entry name" value="Ribosomal proteins S24e, L23 and L15e"/>
    <property type="match status" value="1"/>
</dbReference>
<proteinExistence type="inferred from homology"/>
<accession>Q6F7R4</accession>